<comment type="function">
    <text evidence="1">Involved in the regulation of glutamine synthetase GlnA, a key enzyme in the process to assimilate ammonia. When cellular nitrogen levels are high, the C-terminal adenylyl transferase (AT) inactivates GlnA by covalent transfer of an adenylyl group from ATP to specific tyrosine residue of GlnA, thus reducing its activity. Conversely, when nitrogen levels are low, the N-terminal adenylyl removase (AR) activates GlnA by removing the adenylyl group by phosphorolysis, increasing its activity. The regulatory region of GlnE binds the signal transduction protein PII (GlnB) which indicates the nitrogen status of the cell.</text>
</comment>
<comment type="catalytic activity">
    <reaction evidence="1">
        <text>[glutamine synthetase]-O(4)-(5'-adenylyl)-L-tyrosine + phosphate = [glutamine synthetase]-L-tyrosine + ADP</text>
        <dbReference type="Rhea" id="RHEA:43716"/>
        <dbReference type="Rhea" id="RHEA-COMP:10660"/>
        <dbReference type="Rhea" id="RHEA-COMP:10661"/>
        <dbReference type="ChEBI" id="CHEBI:43474"/>
        <dbReference type="ChEBI" id="CHEBI:46858"/>
        <dbReference type="ChEBI" id="CHEBI:83624"/>
        <dbReference type="ChEBI" id="CHEBI:456216"/>
        <dbReference type="EC" id="2.7.7.89"/>
    </reaction>
</comment>
<comment type="catalytic activity">
    <reaction evidence="1">
        <text>[glutamine synthetase]-L-tyrosine + ATP = [glutamine synthetase]-O(4)-(5'-adenylyl)-L-tyrosine + diphosphate</text>
        <dbReference type="Rhea" id="RHEA:18589"/>
        <dbReference type="Rhea" id="RHEA-COMP:10660"/>
        <dbReference type="Rhea" id="RHEA-COMP:10661"/>
        <dbReference type="ChEBI" id="CHEBI:30616"/>
        <dbReference type="ChEBI" id="CHEBI:33019"/>
        <dbReference type="ChEBI" id="CHEBI:46858"/>
        <dbReference type="ChEBI" id="CHEBI:83624"/>
        <dbReference type="EC" id="2.7.7.42"/>
    </reaction>
</comment>
<comment type="cofactor">
    <cofactor evidence="1">
        <name>Mg(2+)</name>
        <dbReference type="ChEBI" id="CHEBI:18420"/>
    </cofactor>
</comment>
<comment type="similarity">
    <text evidence="1">Belongs to the GlnE family.</text>
</comment>
<keyword id="KW-0067">ATP-binding</keyword>
<keyword id="KW-0460">Magnesium</keyword>
<keyword id="KW-0511">Multifunctional enzyme</keyword>
<keyword id="KW-0547">Nucleotide-binding</keyword>
<keyword id="KW-0548">Nucleotidyltransferase</keyword>
<keyword id="KW-1185">Reference proteome</keyword>
<keyword id="KW-0808">Transferase</keyword>
<protein>
    <recommendedName>
        <fullName evidence="1">Bifunctional glutamine synthetase adenylyltransferase/adenylyl-removing enzyme</fullName>
    </recommendedName>
    <alternativeName>
        <fullName evidence="1">ATP:glutamine synthetase adenylyltransferase</fullName>
    </alternativeName>
    <alternativeName>
        <fullName evidence="1">ATase</fullName>
    </alternativeName>
    <domain>
        <recommendedName>
            <fullName evidence="1">Glutamine synthetase adenylyl-L-tyrosine phosphorylase</fullName>
            <ecNumber evidence="1">2.7.7.89</ecNumber>
        </recommendedName>
        <alternativeName>
            <fullName evidence="1">Adenylyl removase</fullName>
            <shortName evidence="1">AR</shortName>
            <shortName evidence="1">AT-N</shortName>
        </alternativeName>
    </domain>
    <domain>
        <recommendedName>
            <fullName evidence="1">Glutamine synthetase adenylyl transferase</fullName>
            <ecNumber evidence="1">2.7.7.42</ecNumber>
        </recommendedName>
        <alternativeName>
            <fullName evidence="1">Adenylyl transferase</fullName>
            <shortName evidence="1">AT</shortName>
            <shortName evidence="1">AT-C</shortName>
        </alternativeName>
    </domain>
</protein>
<organism>
    <name type="scientific">Methylococcus capsulatus (strain ATCC 33009 / NCIMB 11132 / Bath)</name>
    <dbReference type="NCBI Taxonomy" id="243233"/>
    <lineage>
        <taxon>Bacteria</taxon>
        <taxon>Pseudomonadati</taxon>
        <taxon>Pseudomonadota</taxon>
        <taxon>Gammaproteobacteria</taxon>
        <taxon>Methylococcales</taxon>
        <taxon>Methylococcaceae</taxon>
        <taxon>Methylococcus</taxon>
    </lineage>
</organism>
<gene>
    <name evidence="1" type="primary">glnE</name>
    <name type="ordered locus">MCA2345</name>
</gene>
<feature type="chain" id="PRO_0000209253" description="Bifunctional glutamine synthetase adenylyltransferase/adenylyl-removing enzyme">
    <location>
        <begin position="1"/>
        <end position="948"/>
    </location>
</feature>
<feature type="region of interest" description="Adenylyl removase" evidence="1">
    <location>
        <begin position="1"/>
        <end position="445"/>
    </location>
</feature>
<feature type="region of interest" description="Adenylyl transferase" evidence="1">
    <location>
        <begin position="451"/>
        <end position="948"/>
    </location>
</feature>
<dbReference type="EC" id="2.7.7.89" evidence="1"/>
<dbReference type="EC" id="2.7.7.42" evidence="1"/>
<dbReference type="EMBL" id="AE017282">
    <property type="protein sequence ID" value="AAU91502.1"/>
    <property type="molecule type" value="Genomic_DNA"/>
</dbReference>
<dbReference type="RefSeq" id="WP_010961573.1">
    <property type="nucleotide sequence ID" value="NC_002977.6"/>
</dbReference>
<dbReference type="SMR" id="Q605D9"/>
<dbReference type="STRING" id="243233.MCA2345"/>
<dbReference type="GeneID" id="88224549"/>
<dbReference type="KEGG" id="mca:MCA2345"/>
<dbReference type="eggNOG" id="COG1391">
    <property type="taxonomic scope" value="Bacteria"/>
</dbReference>
<dbReference type="HOGENOM" id="CLU_006233_0_1_6"/>
<dbReference type="Proteomes" id="UP000006821">
    <property type="component" value="Chromosome"/>
</dbReference>
<dbReference type="GO" id="GO:0005829">
    <property type="term" value="C:cytosol"/>
    <property type="evidence" value="ECO:0007669"/>
    <property type="project" value="TreeGrafter"/>
</dbReference>
<dbReference type="GO" id="GO:0008882">
    <property type="term" value="F:[glutamate-ammonia-ligase] adenylyltransferase activity"/>
    <property type="evidence" value="ECO:0007669"/>
    <property type="project" value="UniProtKB-UniRule"/>
</dbReference>
<dbReference type="GO" id="GO:0047388">
    <property type="term" value="F:[glutamine synthetase]-adenylyl-L-tyrosine phosphorylase activity"/>
    <property type="evidence" value="ECO:0007669"/>
    <property type="project" value="UniProtKB-EC"/>
</dbReference>
<dbReference type="GO" id="GO:0005524">
    <property type="term" value="F:ATP binding"/>
    <property type="evidence" value="ECO:0007669"/>
    <property type="project" value="UniProtKB-UniRule"/>
</dbReference>
<dbReference type="GO" id="GO:0000287">
    <property type="term" value="F:magnesium ion binding"/>
    <property type="evidence" value="ECO:0007669"/>
    <property type="project" value="UniProtKB-UniRule"/>
</dbReference>
<dbReference type="GO" id="GO:0000820">
    <property type="term" value="P:regulation of glutamine family amino acid metabolic process"/>
    <property type="evidence" value="ECO:0007669"/>
    <property type="project" value="UniProtKB-UniRule"/>
</dbReference>
<dbReference type="CDD" id="cd05401">
    <property type="entry name" value="NT_GlnE_GlnD_like"/>
    <property type="match status" value="2"/>
</dbReference>
<dbReference type="FunFam" id="1.10.4050.10:FF:000001">
    <property type="entry name" value="Bifunctional glutamine synthetase adenylyltransferase/adenylyl-removing enzyme"/>
    <property type="match status" value="1"/>
</dbReference>
<dbReference type="FunFam" id="1.20.120.330:FF:000005">
    <property type="entry name" value="Bifunctional glutamine synthetase adenylyltransferase/adenylyl-removing enzyme"/>
    <property type="match status" value="1"/>
</dbReference>
<dbReference type="FunFam" id="3.30.460.10:FF:000009">
    <property type="entry name" value="Bifunctional glutamine synthetase adenylyltransferase/adenylyl-removing enzyme"/>
    <property type="match status" value="1"/>
</dbReference>
<dbReference type="Gene3D" id="1.20.120.1510">
    <property type="match status" value="1"/>
</dbReference>
<dbReference type="Gene3D" id="3.30.460.10">
    <property type="entry name" value="Beta Polymerase, domain 2"/>
    <property type="match status" value="2"/>
</dbReference>
<dbReference type="Gene3D" id="1.10.4050.10">
    <property type="entry name" value="Glutamine synthase adenylyltransferase GlnE"/>
    <property type="match status" value="1"/>
</dbReference>
<dbReference type="Gene3D" id="1.20.120.330">
    <property type="entry name" value="Nucleotidyltransferases domain 2"/>
    <property type="match status" value="2"/>
</dbReference>
<dbReference type="HAMAP" id="MF_00802">
    <property type="entry name" value="GlnE"/>
    <property type="match status" value="1"/>
</dbReference>
<dbReference type="InterPro" id="IPR023057">
    <property type="entry name" value="GlnE"/>
</dbReference>
<dbReference type="InterPro" id="IPR005190">
    <property type="entry name" value="GlnE_rpt_dom"/>
</dbReference>
<dbReference type="InterPro" id="IPR043519">
    <property type="entry name" value="NT_sf"/>
</dbReference>
<dbReference type="InterPro" id="IPR013546">
    <property type="entry name" value="PII_UdlTrfase/GS_AdlTrfase"/>
</dbReference>
<dbReference type="NCBIfam" id="NF008292">
    <property type="entry name" value="PRK11072.1"/>
    <property type="match status" value="1"/>
</dbReference>
<dbReference type="PANTHER" id="PTHR30621:SF0">
    <property type="entry name" value="BIFUNCTIONAL GLUTAMINE SYNTHETASE ADENYLYLTRANSFERASE_ADENYLYL-REMOVING ENZYME"/>
    <property type="match status" value="1"/>
</dbReference>
<dbReference type="PANTHER" id="PTHR30621">
    <property type="entry name" value="GLUTAMINE SYNTHETASE ADENYLYLTRANSFERASE"/>
    <property type="match status" value="1"/>
</dbReference>
<dbReference type="Pfam" id="PF08335">
    <property type="entry name" value="GlnD_UR_UTase"/>
    <property type="match status" value="2"/>
</dbReference>
<dbReference type="Pfam" id="PF03710">
    <property type="entry name" value="GlnE"/>
    <property type="match status" value="2"/>
</dbReference>
<dbReference type="SUPFAM" id="SSF81301">
    <property type="entry name" value="Nucleotidyltransferase"/>
    <property type="match status" value="2"/>
</dbReference>
<dbReference type="SUPFAM" id="SSF81593">
    <property type="entry name" value="Nucleotidyltransferase substrate binding subunit/domain"/>
    <property type="match status" value="2"/>
</dbReference>
<name>GLNE_METCA</name>
<accession>Q605D9</accession>
<reference key="1">
    <citation type="journal article" date="2004" name="PLoS Biol.">
        <title>Genomic insights into methanotrophy: the complete genome sequence of Methylococcus capsulatus (Bath).</title>
        <authorList>
            <person name="Ward N.L."/>
            <person name="Larsen O."/>
            <person name="Sakwa J."/>
            <person name="Bruseth L."/>
            <person name="Khouri H.M."/>
            <person name="Durkin A.S."/>
            <person name="Dimitrov G."/>
            <person name="Jiang L."/>
            <person name="Scanlan D."/>
            <person name="Kang K.H."/>
            <person name="Lewis M.R."/>
            <person name="Nelson K.E."/>
            <person name="Methe B.A."/>
            <person name="Wu M."/>
            <person name="Heidelberg J.F."/>
            <person name="Paulsen I.T."/>
            <person name="Fouts D.E."/>
            <person name="Ravel J."/>
            <person name="Tettelin H."/>
            <person name="Ren Q."/>
            <person name="Read T.D."/>
            <person name="DeBoy R.T."/>
            <person name="Seshadri R."/>
            <person name="Salzberg S.L."/>
            <person name="Jensen H.B."/>
            <person name="Birkeland N.K."/>
            <person name="Nelson W.C."/>
            <person name="Dodson R.J."/>
            <person name="Grindhaug S.H."/>
            <person name="Holt I.E."/>
            <person name="Eidhammer I."/>
            <person name="Jonasen I."/>
            <person name="Vanaken S."/>
            <person name="Utterback T.R."/>
            <person name="Feldblyum T.V."/>
            <person name="Fraser C.M."/>
            <person name="Lillehaug J.R."/>
            <person name="Eisen J.A."/>
        </authorList>
    </citation>
    <scope>NUCLEOTIDE SEQUENCE [LARGE SCALE GENOMIC DNA]</scope>
    <source>
        <strain>ATCC 33009 / NCIMB 11132 / Bath</strain>
    </source>
</reference>
<proteinExistence type="inferred from homology"/>
<evidence type="ECO:0000255" key="1">
    <source>
        <dbReference type="HAMAP-Rule" id="MF_00802"/>
    </source>
</evidence>
<sequence length="948" mass="106527">MAPPPDTSGSCSAFHECERIFAQWGYPFQDYSESFRQSLDTVCRCSRFFLGVVKRDAHVIPLLASLFEGQTPERNPSADLQQRVAEVADRNGLMRVLRQWRNREMAIIAWQDICGLLDIDSVLTRISETAESAIRTALDWLFDDACRRWGVPRRKDGSAQSLVVLGMGKLGGYELNFSSDIDLVFAYVEDGELPGRNGATYAEFYTRLAQSLVHVLDAVTEDGFVFRVDVRLRPFGESGPLVVSFDSCERYYQAQARDWERYAMVKVRAVGGDAKDGREFERFFHPFVYRRYLDYRVFGELRSLKARIMAELRRKDRGDNIKLGAGGIREIEFIGQAFQLIRGGRNVELQDRRILVVLERLGRLRLLEHGTASFLCAAYRFLRKVENRLQQYEDKQTHELPVSEERRGLLAFSMGFESWEGFLHRLDEVRRRVHEIFTEVIAEPPQPARGEPLLDGGEAELSQALAGFDGAAEAMTGALVKFRASAPVRRLGAGARAELQRVIGKLLAELAAFRVSDPVGVLGRILELFESIAGRGVYFSLLAENPSALSQLVRLAAASPWIVRLIAGAPILLDELLDPRTLYSPLTRESLGREADILFSSLAPDDDEQLMLRLRQFKAAHQLRIAAADIMNVIPVMVVSDYLTDLAEVVIERVLRLAWKFAAARHGIPPVEAETSVDFPGFGIIAYGKLGGIELGYGSDLDLVFLYDGVASDAVTDGPRPISAAEFYARVVQRMVSLLTADMPGGALYEVDLRLRPSGSSGLLVSKADAYENYQLHQAWTWERQALVRARFVAGDPKVGARFDAIRRNVLCRERDSRQVRLDVRSMREKMREHLADRRPGVFDLKQGVGGIADIEFIVQFGVLISAAKHCEITRWTDTVRLLDSLRAINFLELGQADRLRCAYCDYRGRVHRLALQEMPALAASSEFPGHRTAVEAVWKQIIEAPVF</sequence>